<comment type="function">
    <text evidence="1">Catalyzes the ATP-dependent activation of L-glycine and its transfer to the phosphopantetheine prosthetic group covalently attached to the vicinal carrier protein bsr0959 of yet unknown function. May participate in nonribosomal peptide synthesis or related processes. L-alanine is a poor substrate whereas L-serine or D-amino acids are not substrates for ATP-dependent activation. Does not display tRNA aminoacylation activity.</text>
</comment>
<comment type="catalytic activity">
    <reaction evidence="1">
        <text>an L-alpha-amino acid + holo-[ACP] + ATP = an L-alpha-aminoacyl-[ACP] + AMP + diphosphate</text>
        <dbReference type="Rhea" id="RHEA:52660"/>
        <dbReference type="Rhea" id="RHEA-COMP:9685"/>
        <dbReference type="Rhea" id="RHEA-COMP:13877"/>
        <dbReference type="ChEBI" id="CHEBI:30616"/>
        <dbReference type="ChEBI" id="CHEBI:33019"/>
        <dbReference type="ChEBI" id="CHEBI:59869"/>
        <dbReference type="ChEBI" id="CHEBI:64479"/>
        <dbReference type="ChEBI" id="CHEBI:138175"/>
        <dbReference type="ChEBI" id="CHEBI:456215"/>
        <dbReference type="EC" id="6.2.1.n2"/>
    </reaction>
</comment>
<comment type="cofactor">
    <cofactor evidence="1">
        <name>Zn(2+)</name>
        <dbReference type="ChEBI" id="CHEBI:29105"/>
    </cofactor>
    <text evidence="1">Binds 1 Zn(2+) ion per subunit.</text>
</comment>
<comment type="biophysicochemical properties">
    <kinetics>
        <KM evidence="1">1.19 uM for carrier protein bsr0959</KM>
        <KM evidence="1">0.93 mM for L-glycine</KM>
        <KM evidence="1">25 mM for L-alanine</KM>
        <text>The catalytic efficiency of the glycine activation reaction is 300-fold higher than that of alanine activation.</text>
    </kinetics>
</comment>
<comment type="subunit">
    <text evidence="1">Homodimer.</text>
</comment>
<comment type="interaction">
    <interactant intactId="EBI-16043152">
        <id>Q89VT8</id>
    </interactant>
    <interactant intactId="EBI-16043178">
        <id>Q89VT6</id>
        <label>bsr0959</label>
    </interactant>
    <organismsDiffer>false</organismsDiffer>
    <experiments>4</experiments>
</comment>
<comment type="miscellaneous">
    <text>Lacks the N-terminal tRNA-binding domain compared to class-II aminoacyl-tRNA synthetases.</text>
</comment>
<comment type="similarity">
    <text evidence="2">Belongs to the class-II aminoacyl-tRNA synthetase family. Amino acid--[acyl-carrier-protein] ligase subfamily.</text>
</comment>
<evidence type="ECO:0000269" key="1">
    <source>
    </source>
</evidence>
<evidence type="ECO:0000305" key="2"/>
<evidence type="ECO:0007829" key="3">
    <source>
        <dbReference type="PDB" id="4H2W"/>
    </source>
</evidence>
<accession>Q89VT8</accession>
<keyword id="KW-0002">3D-structure</keyword>
<keyword id="KW-0067">ATP-binding</keyword>
<keyword id="KW-0436">Ligase</keyword>
<keyword id="KW-0479">Metal-binding</keyword>
<keyword id="KW-0547">Nucleotide-binding</keyword>
<keyword id="KW-1185">Reference proteome</keyword>
<keyword id="KW-0862">Zinc</keyword>
<proteinExistence type="evidence at protein level"/>
<name>AACL1_BRADU</name>
<feature type="chain" id="PRO_0000401186" description="Amino acid--[acyl-carrier-protein] ligase 1">
    <location>
        <begin position="1"/>
        <end position="326"/>
    </location>
</feature>
<feature type="binding site">
    <location>
        <position position="131"/>
    </location>
    <ligand>
        <name>Zn(2+)</name>
        <dbReference type="ChEBI" id="CHEBI:29105"/>
        <note>catalytic</note>
    </ligand>
</feature>
<feature type="binding site">
    <location>
        <position position="159"/>
    </location>
    <ligand>
        <name>ATP</name>
        <dbReference type="ChEBI" id="CHEBI:30616"/>
    </ligand>
</feature>
<feature type="binding site">
    <location>
        <position position="161"/>
    </location>
    <ligand>
        <name>ATP</name>
        <dbReference type="ChEBI" id="CHEBI:30616"/>
    </ligand>
</feature>
<feature type="binding site">
    <location>
        <begin position="168"/>
        <end position="169"/>
    </location>
    <ligand>
        <name>ATP</name>
        <dbReference type="ChEBI" id="CHEBI:30616"/>
    </ligand>
</feature>
<feature type="binding site">
    <location>
        <position position="176"/>
    </location>
    <ligand>
        <name>an L-alpha-amino acid</name>
        <dbReference type="ChEBI" id="CHEBI:59869"/>
        <note>substrate</note>
    </ligand>
</feature>
<feature type="binding site">
    <location>
        <position position="176"/>
    </location>
    <ligand>
        <name>Zn(2+)</name>
        <dbReference type="ChEBI" id="CHEBI:29105"/>
        <note>catalytic</note>
    </ligand>
</feature>
<feature type="binding site">
    <location>
        <position position="235"/>
    </location>
    <ligand>
        <name>ATP</name>
        <dbReference type="ChEBI" id="CHEBI:30616"/>
    </ligand>
</feature>
<feature type="binding site">
    <location>
        <begin position="250"/>
        <end position="253"/>
    </location>
    <ligand>
        <name>ATP</name>
        <dbReference type="ChEBI" id="CHEBI:30616"/>
    </ligand>
</feature>
<feature type="binding site">
    <location>
        <position position="279"/>
    </location>
    <ligand>
        <name>Zn(2+)</name>
        <dbReference type="ChEBI" id="CHEBI:29105"/>
        <note>catalytic</note>
    </ligand>
</feature>
<feature type="binding site">
    <location>
        <position position="286"/>
    </location>
    <ligand>
        <name>ATP</name>
        <dbReference type="ChEBI" id="CHEBI:30616"/>
    </ligand>
</feature>
<feature type="helix" evidence="3">
    <location>
        <begin position="21"/>
        <end position="23"/>
    </location>
</feature>
<feature type="helix" evidence="3">
    <location>
        <begin position="24"/>
        <end position="27"/>
    </location>
</feature>
<feature type="strand" evidence="3">
    <location>
        <begin position="28"/>
        <end position="33"/>
    </location>
</feature>
<feature type="strand" evidence="3">
    <location>
        <begin position="36"/>
        <end position="39"/>
    </location>
</feature>
<feature type="helix" evidence="3">
    <location>
        <begin position="41"/>
        <end position="56"/>
    </location>
</feature>
<feature type="strand" evidence="3">
    <location>
        <begin position="62"/>
        <end position="66"/>
    </location>
</feature>
<feature type="strand" evidence="3">
    <location>
        <begin position="69"/>
        <end position="72"/>
    </location>
</feature>
<feature type="helix" evidence="3">
    <location>
        <begin position="73"/>
        <end position="79"/>
    </location>
</feature>
<feature type="helix" evidence="3">
    <location>
        <begin position="81"/>
        <end position="83"/>
    </location>
</feature>
<feature type="helix" evidence="3">
    <location>
        <begin position="86"/>
        <end position="88"/>
    </location>
</feature>
<feature type="strand" evidence="3">
    <location>
        <begin position="91"/>
        <end position="94"/>
    </location>
</feature>
<feature type="helix" evidence="3">
    <location>
        <begin position="99"/>
        <end position="110"/>
    </location>
</feature>
<feature type="helix" evidence="3">
    <location>
        <begin position="115"/>
        <end position="118"/>
    </location>
</feature>
<feature type="strand" evidence="3">
    <location>
        <begin position="120"/>
        <end position="126"/>
    </location>
</feature>
<feature type="strand" evidence="3">
    <location>
        <begin position="128"/>
        <end position="131"/>
    </location>
</feature>
<feature type="helix" evidence="3">
    <location>
        <begin position="134"/>
        <end position="139"/>
    </location>
</feature>
<feature type="strand" evidence="3">
    <location>
        <begin position="149"/>
        <end position="158"/>
    </location>
</feature>
<feature type="strand" evidence="3">
    <location>
        <begin position="170"/>
        <end position="181"/>
    </location>
</feature>
<feature type="helix" evidence="3">
    <location>
        <begin position="183"/>
        <end position="203"/>
    </location>
</feature>
<feature type="strand" evidence="3">
    <location>
        <begin position="209"/>
        <end position="212"/>
    </location>
</feature>
<feature type="helix" evidence="3">
    <location>
        <begin position="219"/>
        <end position="231"/>
    </location>
</feature>
<feature type="strand" evidence="3">
    <location>
        <begin position="235"/>
        <end position="240"/>
    </location>
</feature>
<feature type="strand" evidence="3">
    <location>
        <begin position="245"/>
        <end position="247"/>
    </location>
</feature>
<feature type="strand" evidence="3">
    <location>
        <begin position="249"/>
        <end position="256"/>
    </location>
</feature>
<feature type="helix" evidence="3">
    <location>
        <begin position="260"/>
        <end position="265"/>
    </location>
</feature>
<feature type="strand" evidence="3">
    <location>
        <begin position="272"/>
        <end position="274"/>
    </location>
</feature>
<feature type="strand" evidence="3">
    <location>
        <begin position="276"/>
        <end position="283"/>
    </location>
</feature>
<feature type="helix" evidence="3">
    <location>
        <begin position="284"/>
        <end position="295"/>
    </location>
</feature>
<feature type="helix" evidence="3">
    <location>
        <begin position="299"/>
        <end position="301"/>
    </location>
</feature>
<feature type="helix" evidence="3">
    <location>
        <begin position="304"/>
        <end position="310"/>
    </location>
</feature>
<organism>
    <name type="scientific">Bradyrhizobium diazoefficiens (strain JCM 10833 / BCRC 13528 / IAM 13628 / NBRC 14792 / USDA 110)</name>
    <dbReference type="NCBI Taxonomy" id="224911"/>
    <lineage>
        <taxon>Bacteria</taxon>
        <taxon>Pseudomonadati</taxon>
        <taxon>Pseudomonadota</taxon>
        <taxon>Alphaproteobacteria</taxon>
        <taxon>Hyphomicrobiales</taxon>
        <taxon>Nitrobacteraceae</taxon>
        <taxon>Bradyrhizobium</taxon>
    </lineage>
</organism>
<sequence length="326" mass="35942">MNIAVLPNSPDTAPQIADPLDHLADKLFHSMGSDGVYARTALYESIVERLAALITSHREAGTEALRFPPVMSRAQLEKSGYLKSFPNLLGCVCGLHGTEREINAAVSRFDAGGDWTTSLSPADLVLSPAACYPVYPIAASRGPLPKGGLRFDVAADCFRREPSKHLDRLQSFRMREYVCIGTPDDVSDFRERWMVRAQAIARDLGLTFRVDYASDPFFGRVGQMKAVSQKQQQLKFELLIPLRSEEQPTACMSFNYHREHFGTTWGIQDANGEPAHTGCVAFGMDRLAVAMFHTHGTDLSAWPAKVRDILGLQPHVAAGAHGEGWR</sequence>
<dbReference type="EC" id="6.2.1.n2"/>
<dbReference type="EMBL" id="BA000040">
    <property type="protein sequence ID" value="BAC46222.1"/>
    <property type="molecule type" value="Genomic_DNA"/>
</dbReference>
<dbReference type="RefSeq" id="NP_767597.1">
    <property type="nucleotide sequence ID" value="NC_004463.1"/>
</dbReference>
<dbReference type="RefSeq" id="WP_011083778.1">
    <property type="nucleotide sequence ID" value="NC_004463.1"/>
</dbReference>
<dbReference type="PDB" id="3MEY">
    <property type="method" value="X-ray"/>
    <property type="resolution" value="2.50 A"/>
    <property type="chains" value="A/B=1-326"/>
</dbReference>
<dbReference type="PDB" id="3MF1">
    <property type="method" value="X-ray"/>
    <property type="resolution" value="2.20 A"/>
    <property type="chains" value="A/B=1-326"/>
</dbReference>
<dbReference type="PDB" id="3MF2">
    <property type="method" value="X-ray"/>
    <property type="resolution" value="2.15 A"/>
    <property type="chains" value="A/B=1-326"/>
</dbReference>
<dbReference type="PDB" id="3PZC">
    <property type="method" value="X-ray"/>
    <property type="resolution" value="2.20 A"/>
    <property type="chains" value="A/B=1-326"/>
</dbReference>
<dbReference type="PDB" id="4H2S">
    <property type="method" value="X-ray"/>
    <property type="resolution" value="2.15 A"/>
    <property type="chains" value="A/B=1-326"/>
</dbReference>
<dbReference type="PDB" id="4H2T">
    <property type="method" value="X-ray"/>
    <property type="resolution" value="2.44 A"/>
    <property type="chains" value="A/B=1-326"/>
</dbReference>
<dbReference type="PDB" id="4H2U">
    <property type="method" value="X-ray"/>
    <property type="resolution" value="2.10 A"/>
    <property type="chains" value="A/B=1-326"/>
</dbReference>
<dbReference type="PDB" id="4H2V">
    <property type="method" value="X-ray"/>
    <property type="resolution" value="2.00 A"/>
    <property type="chains" value="A/B=1-326"/>
</dbReference>
<dbReference type="PDB" id="4H2W">
    <property type="method" value="X-ray"/>
    <property type="resolution" value="1.95 A"/>
    <property type="chains" value="A/B=1-220, A/B=232-326"/>
</dbReference>
<dbReference type="PDB" id="4H2X">
    <property type="method" value="X-ray"/>
    <property type="resolution" value="2.15 A"/>
    <property type="chains" value="A/B=1-220, A/B=232-326"/>
</dbReference>
<dbReference type="PDB" id="4H2Y">
    <property type="method" value="X-ray"/>
    <property type="resolution" value="2.10 A"/>
    <property type="chains" value="A/B=1-220, A/B=232-326"/>
</dbReference>
<dbReference type="PDBsum" id="3MEY"/>
<dbReference type="PDBsum" id="3MF1"/>
<dbReference type="PDBsum" id="3MF2"/>
<dbReference type="PDBsum" id="3PZC"/>
<dbReference type="PDBsum" id="4H2S"/>
<dbReference type="PDBsum" id="4H2T"/>
<dbReference type="PDBsum" id="4H2U"/>
<dbReference type="PDBsum" id="4H2V"/>
<dbReference type="PDBsum" id="4H2W"/>
<dbReference type="PDBsum" id="4H2X"/>
<dbReference type="PDBsum" id="4H2Y"/>
<dbReference type="SMR" id="Q89VT8"/>
<dbReference type="DIP" id="DIP-60151N"/>
<dbReference type="IntAct" id="Q89VT8">
    <property type="interactions" value="1"/>
</dbReference>
<dbReference type="STRING" id="224911.AAV28_01625"/>
<dbReference type="EnsemblBacteria" id="BAC46222">
    <property type="protein sequence ID" value="BAC46222"/>
    <property type="gene ID" value="BAC46222"/>
</dbReference>
<dbReference type="GeneID" id="46488226"/>
<dbReference type="KEGG" id="bja:bll0957"/>
<dbReference type="PATRIC" id="fig|224911.44.peg.345"/>
<dbReference type="eggNOG" id="COG0172">
    <property type="taxonomic scope" value="Bacteria"/>
</dbReference>
<dbReference type="HOGENOM" id="CLU_054340_0_0_5"/>
<dbReference type="InParanoid" id="Q89VT8"/>
<dbReference type="OrthoDB" id="583154at2"/>
<dbReference type="PhylomeDB" id="Q89VT8"/>
<dbReference type="BRENDA" id="6.2.1.B4">
    <property type="organism ID" value="929"/>
</dbReference>
<dbReference type="SABIO-RK" id="Q89VT8"/>
<dbReference type="EvolutionaryTrace" id="Q89VT8"/>
<dbReference type="Proteomes" id="UP000002526">
    <property type="component" value="Chromosome"/>
</dbReference>
<dbReference type="GO" id="GO:0004812">
    <property type="term" value="F:aminoacyl-tRNA ligase activity"/>
    <property type="evidence" value="ECO:0007669"/>
    <property type="project" value="InterPro"/>
</dbReference>
<dbReference type="GO" id="GO:0005524">
    <property type="term" value="F:ATP binding"/>
    <property type="evidence" value="ECO:0007669"/>
    <property type="project" value="UniProtKB-KW"/>
</dbReference>
<dbReference type="GO" id="GO:0046872">
    <property type="term" value="F:metal ion binding"/>
    <property type="evidence" value="ECO:0007669"/>
    <property type="project" value="UniProtKB-KW"/>
</dbReference>
<dbReference type="GO" id="GO:0006418">
    <property type="term" value="P:tRNA aminoacylation for protein translation"/>
    <property type="evidence" value="ECO:0007669"/>
    <property type="project" value="InterPro"/>
</dbReference>
<dbReference type="CDD" id="cd00670">
    <property type="entry name" value="Gly_His_Pro_Ser_Thr_tRS_core"/>
    <property type="match status" value="1"/>
</dbReference>
<dbReference type="Gene3D" id="3.30.930.10">
    <property type="entry name" value="Bira Bifunctional Protein, Domain 2"/>
    <property type="match status" value="1"/>
</dbReference>
<dbReference type="InterPro" id="IPR002314">
    <property type="entry name" value="aa-tRNA-synt_IIb"/>
</dbReference>
<dbReference type="InterPro" id="IPR045864">
    <property type="entry name" value="aa-tRNA-synth_II/BPL/LPL"/>
</dbReference>
<dbReference type="NCBIfam" id="NF005479">
    <property type="entry name" value="PRK07080.1"/>
    <property type="match status" value="1"/>
</dbReference>
<dbReference type="Pfam" id="PF00587">
    <property type="entry name" value="tRNA-synt_2b"/>
    <property type="match status" value="1"/>
</dbReference>
<dbReference type="SUPFAM" id="SSF55681">
    <property type="entry name" value="Class II aaRS and biotin synthetases"/>
    <property type="match status" value="1"/>
</dbReference>
<protein>
    <recommendedName>
        <fullName>Amino acid--[acyl-carrier-protein] ligase 1</fullName>
        <ecNumber>6.2.1.n2</ecNumber>
    </recommendedName>
    <alternativeName>
        <fullName>Amino acid:[carrier-protein] ligase [AMP forming] 1</fullName>
        <shortName>aa:CP ligase 1</shortName>
    </alternativeName>
    <alternativeName>
        <fullName>Aminoacyl-[acyl-carrier-protein] synthetase 1</fullName>
    </alternativeName>
    <alternativeName>
        <fullName>L-glycine:[acyl-carrier-protein] ligase 1</fullName>
    </alternativeName>
</protein>
<gene>
    <name type="ordered locus">bll0957</name>
</gene>
<reference key="1">
    <citation type="journal article" date="2002" name="DNA Res.">
        <title>Complete genomic sequence of nitrogen-fixing symbiotic bacterium Bradyrhizobium japonicum USDA110.</title>
        <authorList>
            <person name="Kaneko T."/>
            <person name="Nakamura Y."/>
            <person name="Sato S."/>
            <person name="Minamisawa K."/>
            <person name="Uchiumi T."/>
            <person name="Sasamoto S."/>
            <person name="Watanabe A."/>
            <person name="Idesawa K."/>
            <person name="Iriguchi M."/>
            <person name="Kawashima K."/>
            <person name="Kohara M."/>
            <person name="Matsumoto M."/>
            <person name="Shimpo S."/>
            <person name="Tsuruoka H."/>
            <person name="Wada T."/>
            <person name="Yamada M."/>
            <person name="Tabata S."/>
        </authorList>
    </citation>
    <scope>NUCLEOTIDE SEQUENCE [LARGE SCALE GENOMIC DNA]</scope>
    <source>
        <strain>JCM 10833 / BCRC 13528 / IAM 13628 / NBRC 14792 / USDA 110</strain>
    </source>
</reference>
<reference key="2">
    <citation type="journal article" date="2010" name="Proc. Natl. Acad. Sci. U.S.A.">
        <title>Homologs of aminoacyl-tRNA synthetases acylate carrier proteins and provide a link between ribosomal and nonribosomal peptide synthesis.</title>
        <authorList>
            <person name="Mocibob M."/>
            <person name="Ivic N."/>
            <person name="Bilokapic S."/>
            <person name="Maier T."/>
            <person name="Luic M."/>
            <person name="Ban N."/>
            <person name="Weygand-Durasevic I."/>
        </authorList>
    </citation>
    <scope>X-RAY CRYSTALLOGRAPHY (2.15 ANGSTROMS) IN COMPLEXES WITH ATP; ZINC AND SUBSTRATE ANALOG</scope>
    <scope>FUNCTION</scope>
    <scope>CATALYTIC ACTIVITY</scope>
    <scope>SUBSTRATE SPECIFICITY</scope>
    <scope>COFACTOR</scope>
    <scope>KINETIC PARAMETERS</scope>
    <scope>SUBUNIT</scope>
    <source>
        <strain>JCM 10833 / BCRC 13528 / IAM 13628 / NBRC 14792 / USDA 110</strain>
    </source>
</reference>